<sequence length="210" mass="22874">MVCGGFACSKNALCALNVVYMLVGLLLIGVAAWAKGLGLVSSIHIIGGVIAVGVFLLLIAVAGLVGAVNHHQVLLFFYMIILGLVFIFQFGISCSCLAINLSKQTDVINASWWVMSNKTRDELERSFDCCGLFNLTTLDQQDYAFCTAVCKSRSPTCQMCGEKFLKHSDEALKILGGVGLFFSFTEILGVWLAMRFRNQKDPRANPSAFL</sequence>
<dbReference type="EMBL" id="BC109995">
    <property type="protein sequence ID" value="AAI09996.1"/>
    <property type="molecule type" value="mRNA"/>
</dbReference>
<dbReference type="RefSeq" id="NP_001032684.1">
    <property type="nucleotide sequence ID" value="NM_001037595.3"/>
</dbReference>
<dbReference type="RefSeq" id="XP_005206611.1">
    <property type="nucleotide sequence ID" value="XM_005206554.2"/>
</dbReference>
<dbReference type="SMR" id="Q32KP1"/>
<dbReference type="FunCoup" id="Q32KP1">
    <property type="interactions" value="2745"/>
</dbReference>
<dbReference type="STRING" id="9913.ENSBTAP00000009419"/>
<dbReference type="GlyCosmos" id="Q32KP1">
    <property type="glycosylation" value="4 sites, No reported glycans"/>
</dbReference>
<dbReference type="GlyGen" id="Q32KP1">
    <property type="glycosylation" value="4 sites"/>
</dbReference>
<dbReference type="PaxDb" id="9913-ENSBTAP00000009419"/>
<dbReference type="Ensembl" id="ENSBTAT00000009419.5">
    <property type="protein sequence ID" value="ENSBTAP00000009419.4"/>
    <property type="gene ID" value="ENSBTAG00000007158.6"/>
</dbReference>
<dbReference type="GeneID" id="510619"/>
<dbReference type="KEGG" id="bta:510619"/>
<dbReference type="CTD" id="6302"/>
<dbReference type="VEuPathDB" id="HostDB:ENSBTAG00000007158"/>
<dbReference type="VGNC" id="VGNC:36437">
    <property type="gene designation" value="TSPAN31"/>
</dbReference>
<dbReference type="eggNOG" id="KOG3882">
    <property type="taxonomic scope" value="Eukaryota"/>
</dbReference>
<dbReference type="GeneTree" id="ENSGT00940000160351"/>
<dbReference type="HOGENOM" id="CLU_088363_0_0_1"/>
<dbReference type="InParanoid" id="Q32KP1"/>
<dbReference type="OMA" id="CHAPCKA"/>
<dbReference type="OrthoDB" id="5845060at2759"/>
<dbReference type="TreeFam" id="TF323367"/>
<dbReference type="Proteomes" id="UP000009136">
    <property type="component" value="Chromosome 5"/>
</dbReference>
<dbReference type="Bgee" id="ENSBTAG00000007158">
    <property type="expression patterns" value="Expressed in adenohypophysis and 102 other cell types or tissues"/>
</dbReference>
<dbReference type="GO" id="GO:0016020">
    <property type="term" value="C:membrane"/>
    <property type="evidence" value="ECO:0007669"/>
    <property type="project" value="UniProtKB-SubCell"/>
</dbReference>
<dbReference type="InterPro" id="IPR018499">
    <property type="entry name" value="Tetraspanin/Peripherin"/>
</dbReference>
<dbReference type="InterPro" id="IPR000301">
    <property type="entry name" value="Tetraspanin_animals"/>
</dbReference>
<dbReference type="PANTHER" id="PTHR19282">
    <property type="entry name" value="TETRASPANIN"/>
    <property type="match status" value="1"/>
</dbReference>
<dbReference type="PANTHER" id="PTHR19282:SF3">
    <property type="entry name" value="TETRASPANIN-31"/>
    <property type="match status" value="1"/>
</dbReference>
<dbReference type="Pfam" id="PF00335">
    <property type="entry name" value="Tetraspanin"/>
    <property type="match status" value="1"/>
</dbReference>
<dbReference type="PIRSF" id="PIRSF002419">
    <property type="entry name" value="Tetraspanin"/>
    <property type="match status" value="1"/>
</dbReference>
<dbReference type="PRINTS" id="PR00259">
    <property type="entry name" value="TMFOUR"/>
</dbReference>
<comment type="subcellular location">
    <subcellularLocation>
        <location evidence="1">Membrane</location>
        <topology evidence="1">Multi-pass membrane protein</topology>
    </subcellularLocation>
</comment>
<comment type="similarity">
    <text evidence="3">Belongs to the tetraspanin (TM4SF) family.</text>
</comment>
<keyword id="KW-0325">Glycoprotein</keyword>
<keyword id="KW-0472">Membrane</keyword>
<keyword id="KW-1185">Reference proteome</keyword>
<keyword id="KW-0812">Transmembrane</keyword>
<keyword id="KW-1133">Transmembrane helix</keyword>
<reference key="1">
    <citation type="submission" date="2005-11" db="EMBL/GenBank/DDBJ databases">
        <authorList>
            <consortium name="NIH - Mammalian Gene Collection (MGC) project"/>
        </authorList>
    </citation>
    <scope>NUCLEOTIDE SEQUENCE [LARGE SCALE MRNA]</scope>
    <source>
        <strain>Crossbred X Angus</strain>
        <tissue>Liver</tissue>
    </source>
</reference>
<name>TSN31_BOVIN</name>
<accession>Q32KP1</accession>
<feature type="chain" id="PRO_0000284967" description="Tetraspanin-31">
    <location>
        <begin position="1"/>
        <end position="210"/>
    </location>
</feature>
<feature type="topological domain" description="Cytoplasmic" evidence="2">
    <location>
        <begin position="1"/>
        <end position="12"/>
    </location>
</feature>
<feature type="transmembrane region" description="Helical" evidence="2">
    <location>
        <begin position="13"/>
        <end position="33"/>
    </location>
</feature>
<feature type="topological domain" description="Extracellular" evidence="2">
    <location>
        <begin position="34"/>
        <end position="44"/>
    </location>
</feature>
<feature type="transmembrane region" description="Helical" evidence="2">
    <location>
        <begin position="45"/>
        <end position="65"/>
    </location>
</feature>
<feature type="topological domain" description="Cytoplasmic" evidence="2">
    <location>
        <begin position="66"/>
        <end position="72"/>
    </location>
</feature>
<feature type="transmembrane region" description="Helical" evidence="2">
    <location>
        <begin position="73"/>
        <end position="93"/>
    </location>
</feature>
<feature type="topological domain" description="Extracellular" evidence="2">
    <location>
        <begin position="94"/>
        <end position="173"/>
    </location>
</feature>
<feature type="transmembrane region" description="Helical" evidence="2">
    <location>
        <begin position="174"/>
        <end position="194"/>
    </location>
</feature>
<feature type="topological domain" description="Cytoplasmic" evidence="2">
    <location>
        <begin position="195"/>
        <end position="210"/>
    </location>
</feature>
<feature type="glycosylation site" description="N-linked (GlcNAc...) asparagine" evidence="2">
    <location>
        <position position="100"/>
    </location>
</feature>
<feature type="glycosylation site" description="N-linked (GlcNAc...) asparagine" evidence="2">
    <location>
        <position position="109"/>
    </location>
</feature>
<feature type="glycosylation site" description="N-linked (GlcNAc...) asparagine" evidence="2">
    <location>
        <position position="117"/>
    </location>
</feature>
<feature type="glycosylation site" description="N-linked (GlcNAc...) asparagine" evidence="2">
    <location>
        <position position="134"/>
    </location>
</feature>
<protein>
    <recommendedName>
        <fullName>Tetraspanin-31</fullName>
        <shortName>Tspan-31</shortName>
    </recommendedName>
</protein>
<evidence type="ECO:0000250" key="1"/>
<evidence type="ECO:0000255" key="2"/>
<evidence type="ECO:0000305" key="3"/>
<proteinExistence type="evidence at transcript level"/>
<organism>
    <name type="scientific">Bos taurus</name>
    <name type="common">Bovine</name>
    <dbReference type="NCBI Taxonomy" id="9913"/>
    <lineage>
        <taxon>Eukaryota</taxon>
        <taxon>Metazoa</taxon>
        <taxon>Chordata</taxon>
        <taxon>Craniata</taxon>
        <taxon>Vertebrata</taxon>
        <taxon>Euteleostomi</taxon>
        <taxon>Mammalia</taxon>
        <taxon>Eutheria</taxon>
        <taxon>Laurasiatheria</taxon>
        <taxon>Artiodactyla</taxon>
        <taxon>Ruminantia</taxon>
        <taxon>Pecora</taxon>
        <taxon>Bovidae</taxon>
        <taxon>Bovinae</taxon>
        <taxon>Bos</taxon>
    </lineage>
</organism>
<gene>
    <name type="primary">TSPAN31</name>
</gene>